<protein>
    <recommendedName>
        <fullName evidence="1">Pyridoxal 5'-phosphate synthase subunit PdxS</fullName>
        <shortName evidence="1">PLP synthase subunit PdxS</shortName>
        <ecNumber evidence="1">4.3.3.6</ecNumber>
    </recommendedName>
    <alternativeName>
        <fullName evidence="1">Pdx1</fullName>
    </alternativeName>
</protein>
<gene>
    <name evidence="1" type="primary">pdxS</name>
    <name type="ordered locus">lwe2122</name>
</gene>
<dbReference type="EC" id="4.3.3.6" evidence="1"/>
<dbReference type="EMBL" id="AM263198">
    <property type="protein sequence ID" value="CAK21540.1"/>
    <property type="molecule type" value="Genomic_DNA"/>
</dbReference>
<dbReference type="RefSeq" id="WP_011702880.1">
    <property type="nucleotide sequence ID" value="NC_008555.1"/>
</dbReference>
<dbReference type="SMR" id="A0AKK8"/>
<dbReference type="STRING" id="386043.lwe2122"/>
<dbReference type="GeneID" id="61190022"/>
<dbReference type="KEGG" id="lwe:lwe2122"/>
<dbReference type="eggNOG" id="COG0214">
    <property type="taxonomic scope" value="Bacteria"/>
</dbReference>
<dbReference type="HOGENOM" id="CLU_055352_1_0_9"/>
<dbReference type="OrthoDB" id="9772545at2"/>
<dbReference type="UniPathway" id="UPA00245"/>
<dbReference type="Proteomes" id="UP000000779">
    <property type="component" value="Chromosome"/>
</dbReference>
<dbReference type="GO" id="GO:0036381">
    <property type="term" value="F:pyridoxal 5'-phosphate synthase (glutamine hydrolysing) activity"/>
    <property type="evidence" value="ECO:0007669"/>
    <property type="project" value="UniProtKB-UniRule"/>
</dbReference>
<dbReference type="GO" id="GO:0006520">
    <property type="term" value="P:amino acid metabolic process"/>
    <property type="evidence" value="ECO:0007669"/>
    <property type="project" value="TreeGrafter"/>
</dbReference>
<dbReference type="GO" id="GO:0042823">
    <property type="term" value="P:pyridoxal phosphate biosynthetic process"/>
    <property type="evidence" value="ECO:0007669"/>
    <property type="project" value="UniProtKB-UniRule"/>
</dbReference>
<dbReference type="GO" id="GO:0008615">
    <property type="term" value="P:pyridoxine biosynthetic process"/>
    <property type="evidence" value="ECO:0007669"/>
    <property type="project" value="TreeGrafter"/>
</dbReference>
<dbReference type="CDD" id="cd04727">
    <property type="entry name" value="pdxS"/>
    <property type="match status" value="1"/>
</dbReference>
<dbReference type="FunFam" id="3.20.20.70:FF:000001">
    <property type="entry name" value="Pyridoxine biosynthesis protein PDX1"/>
    <property type="match status" value="1"/>
</dbReference>
<dbReference type="Gene3D" id="3.20.20.70">
    <property type="entry name" value="Aldolase class I"/>
    <property type="match status" value="1"/>
</dbReference>
<dbReference type="HAMAP" id="MF_01824">
    <property type="entry name" value="PdxS"/>
    <property type="match status" value="1"/>
</dbReference>
<dbReference type="InterPro" id="IPR013785">
    <property type="entry name" value="Aldolase_TIM"/>
</dbReference>
<dbReference type="InterPro" id="IPR001852">
    <property type="entry name" value="PdxS/SNZ"/>
</dbReference>
<dbReference type="InterPro" id="IPR033755">
    <property type="entry name" value="PdxS/SNZ_N"/>
</dbReference>
<dbReference type="InterPro" id="IPR011060">
    <property type="entry name" value="RibuloseP-bd_barrel"/>
</dbReference>
<dbReference type="NCBIfam" id="NF003215">
    <property type="entry name" value="PRK04180.1"/>
    <property type="match status" value="1"/>
</dbReference>
<dbReference type="NCBIfam" id="TIGR00343">
    <property type="entry name" value="pyridoxal 5'-phosphate synthase lyase subunit PdxS"/>
    <property type="match status" value="1"/>
</dbReference>
<dbReference type="PANTHER" id="PTHR31829">
    <property type="entry name" value="PYRIDOXAL 5'-PHOSPHATE SYNTHASE SUBUNIT SNZ1-RELATED"/>
    <property type="match status" value="1"/>
</dbReference>
<dbReference type="PANTHER" id="PTHR31829:SF0">
    <property type="entry name" value="PYRIDOXAL 5'-PHOSPHATE SYNTHASE SUBUNIT SNZ1-RELATED"/>
    <property type="match status" value="1"/>
</dbReference>
<dbReference type="Pfam" id="PF01680">
    <property type="entry name" value="SOR_SNZ"/>
    <property type="match status" value="1"/>
</dbReference>
<dbReference type="PIRSF" id="PIRSF029271">
    <property type="entry name" value="Pdx1"/>
    <property type="match status" value="1"/>
</dbReference>
<dbReference type="SUPFAM" id="SSF51366">
    <property type="entry name" value="Ribulose-phoshate binding barrel"/>
    <property type="match status" value="1"/>
</dbReference>
<dbReference type="PROSITE" id="PS01235">
    <property type="entry name" value="PDXS_SNZ_1"/>
    <property type="match status" value="1"/>
</dbReference>
<dbReference type="PROSITE" id="PS51129">
    <property type="entry name" value="PDXS_SNZ_2"/>
    <property type="match status" value="1"/>
</dbReference>
<keyword id="KW-0456">Lyase</keyword>
<keyword id="KW-0663">Pyridoxal phosphate</keyword>
<keyword id="KW-0704">Schiff base</keyword>
<comment type="function">
    <text evidence="1">Catalyzes the formation of pyridoxal 5'-phosphate from ribose 5-phosphate (RBP), glyceraldehyde 3-phosphate (G3P) and ammonia. The ammonia is provided by the PdxT subunit. Can also use ribulose 5-phosphate and dihydroxyacetone phosphate as substrates, resulting from enzyme-catalyzed isomerization of RBP and G3P, respectively.</text>
</comment>
<comment type="catalytic activity">
    <reaction evidence="1">
        <text>aldehydo-D-ribose 5-phosphate + D-glyceraldehyde 3-phosphate + L-glutamine = pyridoxal 5'-phosphate + L-glutamate + phosphate + 3 H2O + H(+)</text>
        <dbReference type="Rhea" id="RHEA:31507"/>
        <dbReference type="ChEBI" id="CHEBI:15377"/>
        <dbReference type="ChEBI" id="CHEBI:15378"/>
        <dbReference type="ChEBI" id="CHEBI:29985"/>
        <dbReference type="ChEBI" id="CHEBI:43474"/>
        <dbReference type="ChEBI" id="CHEBI:58273"/>
        <dbReference type="ChEBI" id="CHEBI:58359"/>
        <dbReference type="ChEBI" id="CHEBI:59776"/>
        <dbReference type="ChEBI" id="CHEBI:597326"/>
        <dbReference type="EC" id="4.3.3.6"/>
    </reaction>
</comment>
<comment type="pathway">
    <text evidence="1">Cofactor biosynthesis; pyridoxal 5'-phosphate biosynthesis.</text>
</comment>
<comment type="subunit">
    <text evidence="1">In the presence of PdxT, forms a dodecamer of heterodimers.</text>
</comment>
<comment type="similarity">
    <text evidence="1">Belongs to the PdxS/SNZ family.</text>
</comment>
<proteinExistence type="inferred from homology"/>
<name>PDXS_LISW6</name>
<reference key="1">
    <citation type="journal article" date="2006" name="J. Bacteriol.">
        <title>Whole-genome sequence of Listeria welshimeri reveals common steps in genome reduction with Listeria innocua as compared to Listeria monocytogenes.</title>
        <authorList>
            <person name="Hain T."/>
            <person name="Steinweg C."/>
            <person name="Kuenne C.T."/>
            <person name="Billion A."/>
            <person name="Ghai R."/>
            <person name="Chatterjee S.S."/>
            <person name="Domann E."/>
            <person name="Kaerst U."/>
            <person name="Goesmann A."/>
            <person name="Bekel T."/>
            <person name="Bartels D."/>
            <person name="Kaiser O."/>
            <person name="Meyer F."/>
            <person name="Puehler A."/>
            <person name="Weisshaar B."/>
            <person name="Wehland J."/>
            <person name="Liang C."/>
            <person name="Dandekar T."/>
            <person name="Lampidis R."/>
            <person name="Kreft J."/>
            <person name="Goebel W."/>
            <person name="Chakraborty T."/>
        </authorList>
    </citation>
    <scope>NUCLEOTIDE SEQUENCE [LARGE SCALE GENOMIC DNA]</scope>
    <source>
        <strain>ATCC 35897 / DSM 20650 / CCUG 15529 / CIP 8149 / NCTC 11857 / SLCC 5334 / V8</strain>
    </source>
</reference>
<feature type="chain" id="PRO_1000070381" description="Pyridoxal 5'-phosphate synthase subunit PdxS">
    <location>
        <begin position="1"/>
        <end position="295"/>
    </location>
</feature>
<feature type="active site" description="Schiff-base intermediate with D-ribose 5-phosphate" evidence="1">
    <location>
        <position position="82"/>
    </location>
</feature>
<feature type="binding site" evidence="1">
    <location>
        <position position="25"/>
    </location>
    <ligand>
        <name>D-ribose 5-phosphate</name>
        <dbReference type="ChEBI" id="CHEBI:78346"/>
    </ligand>
</feature>
<feature type="binding site" evidence="1">
    <location>
        <position position="154"/>
    </location>
    <ligand>
        <name>D-ribose 5-phosphate</name>
        <dbReference type="ChEBI" id="CHEBI:78346"/>
    </ligand>
</feature>
<feature type="binding site" evidence="1">
    <location>
        <position position="166"/>
    </location>
    <ligand>
        <name>D-glyceraldehyde 3-phosphate</name>
        <dbReference type="ChEBI" id="CHEBI:59776"/>
    </ligand>
</feature>
<feature type="binding site" evidence="1">
    <location>
        <position position="215"/>
    </location>
    <ligand>
        <name>D-ribose 5-phosphate</name>
        <dbReference type="ChEBI" id="CHEBI:78346"/>
    </ligand>
</feature>
<feature type="binding site" evidence="1">
    <location>
        <begin position="236"/>
        <end position="237"/>
    </location>
    <ligand>
        <name>D-ribose 5-phosphate</name>
        <dbReference type="ChEBI" id="CHEBI:78346"/>
    </ligand>
</feature>
<accession>A0AKK8</accession>
<evidence type="ECO:0000255" key="1">
    <source>
        <dbReference type="HAMAP-Rule" id="MF_01824"/>
    </source>
</evidence>
<sequence length="295" mass="31661">MEKKVGTDRVKRGMAQMQKGGVIMDVVNAEQAKIAEDAGAVAVMALERVPSDIRAAGGVARMADPRIVEEVMNAVSIPVMAKARIGHITEARVLEAMGVDYIDESEVLTPADDEFHLLKSDFTVPFVCGCRDIGEALRRIGEGAAMLRTKGEPGTGNIVEAVRHMRQVNGQIRQIVGMTDDELMVAAKNFGAPYELVKEIKSLGKLPVVNFAAGGVATPSDAALMMELGADGVFVGSGIFKSDNPAKFASAIVQATTYYTDYELIGKLSKELGSPMKGIEMSRLNPEDRMQDRSV</sequence>
<organism>
    <name type="scientific">Listeria welshimeri serovar 6b (strain ATCC 35897 / DSM 20650 / CCUG 15529 / CIP 8149 / NCTC 11857 / SLCC 5334 / V8)</name>
    <dbReference type="NCBI Taxonomy" id="386043"/>
    <lineage>
        <taxon>Bacteria</taxon>
        <taxon>Bacillati</taxon>
        <taxon>Bacillota</taxon>
        <taxon>Bacilli</taxon>
        <taxon>Bacillales</taxon>
        <taxon>Listeriaceae</taxon>
        <taxon>Listeria</taxon>
    </lineage>
</organism>